<keyword id="KW-0233">DNA recombination</keyword>
<keyword id="KW-0238">DNA-binding</keyword>
<keyword id="KW-0804">Transcription</keyword>
<keyword id="KW-0805">Transcription regulation</keyword>
<keyword id="KW-0810">Translation regulation</keyword>
<feature type="chain" id="PRO_1000122138" description="Integration host factor subunit alpha">
    <location>
        <begin position="1"/>
        <end position="99"/>
    </location>
</feature>
<feature type="region of interest" description="Disordered" evidence="2">
    <location>
        <begin position="49"/>
        <end position="73"/>
    </location>
</feature>
<name>IHFA_ECODH</name>
<dbReference type="EMBL" id="CP000948">
    <property type="protein sequence ID" value="ACB02913.1"/>
    <property type="molecule type" value="Genomic_DNA"/>
</dbReference>
<dbReference type="RefSeq" id="WP_001229265.1">
    <property type="nucleotide sequence ID" value="NC_010473.1"/>
</dbReference>
<dbReference type="SMR" id="B1XG19"/>
<dbReference type="GeneID" id="93775925"/>
<dbReference type="KEGG" id="ecd:ECDH10B_1848"/>
<dbReference type="HOGENOM" id="CLU_105066_1_3_6"/>
<dbReference type="GO" id="GO:0005829">
    <property type="term" value="C:cytosol"/>
    <property type="evidence" value="ECO:0007669"/>
    <property type="project" value="TreeGrafter"/>
</dbReference>
<dbReference type="GO" id="GO:0003677">
    <property type="term" value="F:DNA binding"/>
    <property type="evidence" value="ECO:0007669"/>
    <property type="project" value="UniProtKB-UniRule"/>
</dbReference>
<dbReference type="GO" id="GO:0030527">
    <property type="term" value="F:structural constituent of chromatin"/>
    <property type="evidence" value="ECO:0007669"/>
    <property type="project" value="InterPro"/>
</dbReference>
<dbReference type="GO" id="GO:0006310">
    <property type="term" value="P:DNA recombination"/>
    <property type="evidence" value="ECO:0007669"/>
    <property type="project" value="UniProtKB-UniRule"/>
</dbReference>
<dbReference type="GO" id="GO:0009893">
    <property type="term" value="P:positive regulation of metabolic process"/>
    <property type="evidence" value="ECO:0007669"/>
    <property type="project" value="UniProtKB-ARBA"/>
</dbReference>
<dbReference type="GO" id="GO:0006355">
    <property type="term" value="P:regulation of DNA-templated transcription"/>
    <property type="evidence" value="ECO:0007669"/>
    <property type="project" value="UniProtKB-UniRule"/>
</dbReference>
<dbReference type="GO" id="GO:0006417">
    <property type="term" value="P:regulation of translation"/>
    <property type="evidence" value="ECO:0007669"/>
    <property type="project" value="UniProtKB-UniRule"/>
</dbReference>
<dbReference type="CDD" id="cd13835">
    <property type="entry name" value="IHF_A"/>
    <property type="match status" value="1"/>
</dbReference>
<dbReference type="FunFam" id="4.10.520.10:FF:000002">
    <property type="entry name" value="Integration host factor subunit alpha"/>
    <property type="match status" value="1"/>
</dbReference>
<dbReference type="Gene3D" id="4.10.520.10">
    <property type="entry name" value="IHF-like DNA-binding proteins"/>
    <property type="match status" value="1"/>
</dbReference>
<dbReference type="HAMAP" id="MF_00380">
    <property type="entry name" value="IHF_alpha"/>
    <property type="match status" value="1"/>
</dbReference>
<dbReference type="InterPro" id="IPR000119">
    <property type="entry name" value="Hist_DNA-bd"/>
</dbReference>
<dbReference type="InterPro" id="IPR020816">
    <property type="entry name" value="Histone-like_DNA-bd_CS"/>
</dbReference>
<dbReference type="InterPro" id="IPR010992">
    <property type="entry name" value="IHF-like_DNA-bd_dom_sf"/>
</dbReference>
<dbReference type="InterPro" id="IPR005684">
    <property type="entry name" value="IHF_alpha"/>
</dbReference>
<dbReference type="NCBIfam" id="TIGR00987">
    <property type="entry name" value="himA"/>
    <property type="match status" value="1"/>
</dbReference>
<dbReference type="NCBIfam" id="NF001401">
    <property type="entry name" value="PRK00285.1"/>
    <property type="match status" value="1"/>
</dbReference>
<dbReference type="PANTHER" id="PTHR33175">
    <property type="entry name" value="DNA-BINDING PROTEIN HU"/>
    <property type="match status" value="1"/>
</dbReference>
<dbReference type="PANTHER" id="PTHR33175:SF2">
    <property type="entry name" value="INTEGRATION HOST FACTOR SUBUNIT ALPHA"/>
    <property type="match status" value="1"/>
</dbReference>
<dbReference type="Pfam" id="PF00216">
    <property type="entry name" value="Bac_DNA_binding"/>
    <property type="match status" value="1"/>
</dbReference>
<dbReference type="PRINTS" id="PR01727">
    <property type="entry name" value="DNABINDINGHU"/>
</dbReference>
<dbReference type="SMART" id="SM00411">
    <property type="entry name" value="BHL"/>
    <property type="match status" value="1"/>
</dbReference>
<dbReference type="SUPFAM" id="SSF47729">
    <property type="entry name" value="IHF-like DNA-binding proteins"/>
    <property type="match status" value="1"/>
</dbReference>
<dbReference type="PROSITE" id="PS00045">
    <property type="entry name" value="HISTONE_LIKE"/>
    <property type="match status" value="1"/>
</dbReference>
<proteinExistence type="inferred from homology"/>
<gene>
    <name evidence="1" type="primary">ihfA</name>
    <name evidence="1" type="synonym">himA</name>
    <name type="ordered locus">ECDH10B_1848</name>
</gene>
<comment type="function">
    <text evidence="1">This protein is one of the two subunits of integration host factor, a specific DNA-binding protein that functions in genetic recombination as well as in transcriptional and translational control.</text>
</comment>
<comment type="subunit">
    <text evidence="1">Heterodimer of an alpha and a beta chain.</text>
</comment>
<comment type="similarity">
    <text evidence="1">Belongs to the bacterial histone-like protein family.</text>
</comment>
<protein>
    <recommendedName>
        <fullName evidence="1">Integration host factor subunit alpha</fullName>
        <shortName evidence="1">IHF-alpha</shortName>
    </recommendedName>
</protein>
<reference key="1">
    <citation type="journal article" date="2008" name="J. Bacteriol.">
        <title>The complete genome sequence of Escherichia coli DH10B: insights into the biology of a laboratory workhorse.</title>
        <authorList>
            <person name="Durfee T."/>
            <person name="Nelson R."/>
            <person name="Baldwin S."/>
            <person name="Plunkett G. III"/>
            <person name="Burland V."/>
            <person name="Mau B."/>
            <person name="Petrosino J.F."/>
            <person name="Qin X."/>
            <person name="Muzny D.M."/>
            <person name="Ayele M."/>
            <person name="Gibbs R.A."/>
            <person name="Csorgo B."/>
            <person name="Posfai G."/>
            <person name="Weinstock G.M."/>
            <person name="Blattner F.R."/>
        </authorList>
    </citation>
    <scope>NUCLEOTIDE SEQUENCE [LARGE SCALE GENOMIC DNA]</scope>
    <source>
        <strain>K12 / DH10B</strain>
    </source>
</reference>
<organism>
    <name type="scientific">Escherichia coli (strain K12 / DH10B)</name>
    <dbReference type="NCBI Taxonomy" id="316385"/>
    <lineage>
        <taxon>Bacteria</taxon>
        <taxon>Pseudomonadati</taxon>
        <taxon>Pseudomonadota</taxon>
        <taxon>Gammaproteobacteria</taxon>
        <taxon>Enterobacterales</taxon>
        <taxon>Enterobacteriaceae</taxon>
        <taxon>Escherichia</taxon>
    </lineage>
</organism>
<evidence type="ECO:0000255" key="1">
    <source>
        <dbReference type="HAMAP-Rule" id="MF_00380"/>
    </source>
</evidence>
<evidence type="ECO:0000256" key="2">
    <source>
        <dbReference type="SAM" id="MobiDB-lite"/>
    </source>
</evidence>
<sequence>MALTKAEMSEYLFDKLGLSKRDAKELVELFFEEIRRALENGEQVKLSGFGNFDLRDKNQRPGRNPKTGEDIPITARRVVTFRPGQKLKSRVENASPKDE</sequence>
<accession>B1XG19</accession>